<keyword id="KW-0028">Amino-acid biosynthesis</keyword>
<keyword id="KW-0170">Cobalt</keyword>
<keyword id="KW-0220">Diaminopimelate biosynthesis</keyword>
<keyword id="KW-0378">Hydrolase</keyword>
<keyword id="KW-0457">Lysine biosynthesis</keyword>
<keyword id="KW-0479">Metal-binding</keyword>
<keyword id="KW-0862">Zinc</keyword>
<sequence>MREKVVSLAQDLIHRSSISPNDEGCQKIIAERLEKLGFQIEWMPFNDTLNLWAKHGTSEPVIAFAGHTDVVPTGDENQWSSPPFSAEIIDGMLYGRGAADMKGSLAAMIVAAEEYVKANPNHKGIIALLITSDEEAAAKDGTIRVVETLMTRDEKITYCMVGEPSSAKNLGDVVKNGRRGSITGNLYIQGIQGHVAYPHLAENPIHKAALFLQELTTYQWDKGNEFFPPTSLQIANIHAGTGSNNVIPAELYIQFNLRYCTEVTDEIIKQKVAEMLEKHNLKYRIEWNLSGNPFLTKPGKLLDSITSAIEETIGITPKAETGGGTSDGRFIALMGAEVVEFGPLNSTIHKVNECVSVEDLGKCGEIYHKMLVNLLDS</sequence>
<protein>
    <recommendedName>
        <fullName evidence="1">Succinyl-diaminopimelate desuccinylase</fullName>
        <shortName evidence="1">SDAP desuccinylase</shortName>
        <ecNumber evidence="1">3.5.1.18</ecNumber>
    </recommendedName>
    <alternativeName>
        <fullName evidence="1">N-succinyl-LL-2,6-diaminoheptanedioate amidohydrolase</fullName>
    </alternativeName>
</protein>
<dbReference type="EC" id="3.5.1.18" evidence="1"/>
<dbReference type="EMBL" id="CP000672">
    <property type="protein sequence ID" value="ABQ99612.1"/>
    <property type="molecule type" value="Genomic_DNA"/>
</dbReference>
<dbReference type="SMR" id="A5UFQ7"/>
<dbReference type="KEGG" id="hiq:CGSHiGG_03055"/>
<dbReference type="HOGENOM" id="CLU_021802_4_0_6"/>
<dbReference type="UniPathway" id="UPA00034">
    <property type="reaction ID" value="UER00021"/>
</dbReference>
<dbReference type="Proteomes" id="UP000001990">
    <property type="component" value="Chromosome"/>
</dbReference>
<dbReference type="GO" id="GO:0008777">
    <property type="term" value="F:acetylornithine deacetylase activity"/>
    <property type="evidence" value="ECO:0007669"/>
    <property type="project" value="TreeGrafter"/>
</dbReference>
<dbReference type="GO" id="GO:0050897">
    <property type="term" value="F:cobalt ion binding"/>
    <property type="evidence" value="ECO:0007669"/>
    <property type="project" value="UniProtKB-UniRule"/>
</dbReference>
<dbReference type="GO" id="GO:0009014">
    <property type="term" value="F:succinyl-diaminopimelate desuccinylase activity"/>
    <property type="evidence" value="ECO:0007669"/>
    <property type="project" value="UniProtKB-UniRule"/>
</dbReference>
<dbReference type="GO" id="GO:0008270">
    <property type="term" value="F:zinc ion binding"/>
    <property type="evidence" value="ECO:0007669"/>
    <property type="project" value="UniProtKB-UniRule"/>
</dbReference>
<dbReference type="GO" id="GO:0019877">
    <property type="term" value="P:diaminopimelate biosynthetic process"/>
    <property type="evidence" value="ECO:0007669"/>
    <property type="project" value="UniProtKB-UniRule"/>
</dbReference>
<dbReference type="GO" id="GO:0006526">
    <property type="term" value="P:L-arginine biosynthetic process"/>
    <property type="evidence" value="ECO:0007669"/>
    <property type="project" value="TreeGrafter"/>
</dbReference>
<dbReference type="GO" id="GO:0009089">
    <property type="term" value="P:lysine biosynthetic process via diaminopimelate"/>
    <property type="evidence" value="ECO:0007669"/>
    <property type="project" value="UniProtKB-UniRule"/>
</dbReference>
<dbReference type="CDD" id="cd03891">
    <property type="entry name" value="M20_DapE_proteobac"/>
    <property type="match status" value="1"/>
</dbReference>
<dbReference type="FunFam" id="3.30.70.360:FF:000011">
    <property type="entry name" value="Succinyl-diaminopimelate desuccinylase"/>
    <property type="match status" value="1"/>
</dbReference>
<dbReference type="FunFam" id="3.40.630.10:FF:000005">
    <property type="entry name" value="Succinyl-diaminopimelate desuccinylase"/>
    <property type="match status" value="1"/>
</dbReference>
<dbReference type="Gene3D" id="3.30.70.360">
    <property type="match status" value="1"/>
</dbReference>
<dbReference type="Gene3D" id="3.40.630.10">
    <property type="entry name" value="Zn peptidases"/>
    <property type="match status" value="1"/>
</dbReference>
<dbReference type="HAMAP" id="MF_01690">
    <property type="entry name" value="DapE"/>
    <property type="match status" value="1"/>
</dbReference>
<dbReference type="InterPro" id="IPR001261">
    <property type="entry name" value="ArgE/DapE_CS"/>
</dbReference>
<dbReference type="InterPro" id="IPR036264">
    <property type="entry name" value="Bact_exopeptidase_dim_dom"/>
</dbReference>
<dbReference type="InterPro" id="IPR005941">
    <property type="entry name" value="DapE_proteobac"/>
</dbReference>
<dbReference type="InterPro" id="IPR002933">
    <property type="entry name" value="Peptidase_M20"/>
</dbReference>
<dbReference type="InterPro" id="IPR011650">
    <property type="entry name" value="Peptidase_M20_dimer"/>
</dbReference>
<dbReference type="InterPro" id="IPR050072">
    <property type="entry name" value="Peptidase_M20A"/>
</dbReference>
<dbReference type="NCBIfam" id="TIGR01246">
    <property type="entry name" value="dapE_proteo"/>
    <property type="match status" value="1"/>
</dbReference>
<dbReference type="NCBIfam" id="NF009557">
    <property type="entry name" value="PRK13009.1"/>
    <property type="match status" value="1"/>
</dbReference>
<dbReference type="PANTHER" id="PTHR43808">
    <property type="entry name" value="ACETYLORNITHINE DEACETYLASE"/>
    <property type="match status" value="1"/>
</dbReference>
<dbReference type="PANTHER" id="PTHR43808:SF31">
    <property type="entry name" value="N-ACETYL-L-CITRULLINE DEACETYLASE"/>
    <property type="match status" value="1"/>
</dbReference>
<dbReference type="Pfam" id="PF07687">
    <property type="entry name" value="M20_dimer"/>
    <property type="match status" value="1"/>
</dbReference>
<dbReference type="Pfam" id="PF01546">
    <property type="entry name" value="Peptidase_M20"/>
    <property type="match status" value="1"/>
</dbReference>
<dbReference type="SUPFAM" id="SSF55031">
    <property type="entry name" value="Bacterial exopeptidase dimerisation domain"/>
    <property type="match status" value="1"/>
</dbReference>
<dbReference type="SUPFAM" id="SSF53187">
    <property type="entry name" value="Zn-dependent exopeptidases"/>
    <property type="match status" value="1"/>
</dbReference>
<dbReference type="PROSITE" id="PS00758">
    <property type="entry name" value="ARGE_DAPE_CPG2_1"/>
    <property type="match status" value="1"/>
</dbReference>
<evidence type="ECO:0000255" key="1">
    <source>
        <dbReference type="HAMAP-Rule" id="MF_01690"/>
    </source>
</evidence>
<comment type="function">
    <text evidence="1">Catalyzes the hydrolysis of N-succinyl-L,L-diaminopimelic acid (SDAP), forming succinate and LL-2,6-diaminopimelate (DAP), an intermediate involved in the bacterial biosynthesis of lysine and meso-diaminopimelic acid, an essential component of bacterial cell walls.</text>
</comment>
<comment type="catalytic activity">
    <reaction evidence="1">
        <text>N-succinyl-(2S,6S)-2,6-diaminopimelate + H2O = (2S,6S)-2,6-diaminopimelate + succinate</text>
        <dbReference type="Rhea" id="RHEA:22608"/>
        <dbReference type="ChEBI" id="CHEBI:15377"/>
        <dbReference type="ChEBI" id="CHEBI:30031"/>
        <dbReference type="ChEBI" id="CHEBI:57609"/>
        <dbReference type="ChEBI" id="CHEBI:58087"/>
        <dbReference type="EC" id="3.5.1.18"/>
    </reaction>
</comment>
<comment type="cofactor">
    <cofactor evidence="1">
        <name>Zn(2+)</name>
        <dbReference type="ChEBI" id="CHEBI:29105"/>
    </cofactor>
    <cofactor evidence="1">
        <name>Co(2+)</name>
        <dbReference type="ChEBI" id="CHEBI:48828"/>
    </cofactor>
    <text evidence="1">Binds 2 Zn(2+) or Co(2+) ions per subunit.</text>
</comment>
<comment type="pathway">
    <text evidence="1">Amino-acid biosynthesis; L-lysine biosynthesis via DAP pathway; LL-2,6-diaminopimelate from (S)-tetrahydrodipicolinate (succinylase route): step 3/3.</text>
</comment>
<comment type="subunit">
    <text evidence="1">Homodimer.</text>
</comment>
<comment type="similarity">
    <text evidence="1">Belongs to the peptidase M20A family. DapE subfamily.</text>
</comment>
<accession>A5UFQ7</accession>
<feature type="chain" id="PRO_0000375578" description="Succinyl-diaminopimelate desuccinylase">
    <location>
        <begin position="1"/>
        <end position="377"/>
    </location>
</feature>
<feature type="active site" evidence="1">
    <location>
        <position position="69"/>
    </location>
</feature>
<feature type="active site" description="Proton acceptor" evidence="1">
    <location>
        <position position="134"/>
    </location>
</feature>
<feature type="binding site" evidence="1">
    <location>
        <position position="67"/>
    </location>
    <ligand>
        <name>Zn(2+)</name>
        <dbReference type="ChEBI" id="CHEBI:29105"/>
        <label>1</label>
    </ligand>
</feature>
<feature type="binding site" evidence="1">
    <location>
        <position position="100"/>
    </location>
    <ligand>
        <name>Zn(2+)</name>
        <dbReference type="ChEBI" id="CHEBI:29105"/>
        <label>1</label>
    </ligand>
</feature>
<feature type="binding site" evidence="1">
    <location>
        <position position="100"/>
    </location>
    <ligand>
        <name>Zn(2+)</name>
        <dbReference type="ChEBI" id="CHEBI:29105"/>
        <label>2</label>
    </ligand>
</feature>
<feature type="binding site" evidence="1">
    <location>
        <position position="135"/>
    </location>
    <ligand>
        <name>Zn(2+)</name>
        <dbReference type="ChEBI" id="CHEBI:29105"/>
        <label>2</label>
    </ligand>
</feature>
<feature type="binding site" evidence="1">
    <location>
        <position position="163"/>
    </location>
    <ligand>
        <name>Zn(2+)</name>
        <dbReference type="ChEBI" id="CHEBI:29105"/>
        <label>1</label>
    </ligand>
</feature>
<feature type="binding site" evidence="1">
    <location>
        <position position="349"/>
    </location>
    <ligand>
        <name>Zn(2+)</name>
        <dbReference type="ChEBI" id="CHEBI:29105"/>
        <label>2</label>
    </ligand>
</feature>
<name>DAPE_HAEIG</name>
<organism>
    <name type="scientific">Haemophilus influenzae (strain PittGG)</name>
    <dbReference type="NCBI Taxonomy" id="374931"/>
    <lineage>
        <taxon>Bacteria</taxon>
        <taxon>Pseudomonadati</taxon>
        <taxon>Pseudomonadota</taxon>
        <taxon>Gammaproteobacteria</taxon>
        <taxon>Pasteurellales</taxon>
        <taxon>Pasteurellaceae</taxon>
        <taxon>Haemophilus</taxon>
    </lineage>
</organism>
<gene>
    <name evidence="1" type="primary">dapE</name>
    <name type="ordered locus">CGSHiGG_03055</name>
</gene>
<proteinExistence type="inferred from homology"/>
<reference key="1">
    <citation type="journal article" date="2007" name="Genome Biol.">
        <title>Characterization and modeling of the Haemophilus influenzae core and supragenomes based on the complete genomic sequences of Rd and 12 clinical nontypeable strains.</title>
        <authorList>
            <person name="Hogg J.S."/>
            <person name="Hu F.Z."/>
            <person name="Janto B."/>
            <person name="Boissy R."/>
            <person name="Hayes J."/>
            <person name="Keefe R."/>
            <person name="Post J.C."/>
            <person name="Ehrlich G.D."/>
        </authorList>
    </citation>
    <scope>NUCLEOTIDE SEQUENCE [LARGE SCALE GENOMIC DNA]</scope>
    <source>
        <strain>PittGG</strain>
    </source>
</reference>